<name>ACO11_CHORO</name>
<evidence type="ECO:0000250" key="1"/>
<evidence type="ECO:0000255" key="2"/>
<evidence type="ECO:0000256" key="3">
    <source>
        <dbReference type="SAM" id="MobiDB-lite"/>
    </source>
</evidence>
<evidence type="ECO:0000269" key="4">
    <source>
    </source>
</evidence>
<evidence type="ECO:0000305" key="5"/>
<protein>
    <recommendedName>
        <fullName>Acyl-CoA Delta(11) desaturase</fullName>
        <ecNumber evidence="4">1.14.19.5</ecNumber>
    </recommendedName>
    <alternativeName>
        <fullName>Acyl-CoA Delta-11 desaturase</fullName>
        <shortName>Delta(11)-desaturase</shortName>
    </alternativeName>
    <alternativeName>
        <fullName>Acyl-CoA Z/E11 desaturase</fullName>
    </alternativeName>
</protein>
<proteinExistence type="evidence at protein level"/>
<feature type="chain" id="PRO_0000418990" description="Acyl-CoA Delta(11) desaturase">
    <location>
        <begin position="1"/>
        <end position="335"/>
    </location>
</feature>
<feature type="transmembrane region" description="Helical" evidence="2">
    <location>
        <begin position="39"/>
        <end position="59"/>
    </location>
</feature>
<feature type="transmembrane region" description="Helical" evidence="2">
    <location>
        <begin position="64"/>
        <end position="84"/>
    </location>
</feature>
<feature type="transmembrane region" description="Helical" evidence="2">
    <location>
        <begin position="98"/>
        <end position="118"/>
    </location>
</feature>
<feature type="transmembrane region" description="Helical" evidence="2">
    <location>
        <begin position="182"/>
        <end position="202"/>
    </location>
</feature>
<feature type="transmembrane region" description="Helical" evidence="2">
    <location>
        <begin position="213"/>
        <end position="235"/>
    </location>
</feature>
<feature type="region of interest" description="Disordered" evidence="3">
    <location>
        <begin position="312"/>
        <end position="335"/>
    </location>
</feature>
<feature type="short sequence motif" description="Histidine box-1">
    <location>
        <begin position="84"/>
        <end position="89"/>
    </location>
</feature>
<feature type="short sequence motif" description="Histidine box-2">
    <location>
        <begin position="121"/>
        <end position="125"/>
    </location>
</feature>
<feature type="short sequence motif" description="Histidine box-3">
    <location>
        <begin position="261"/>
        <end position="265"/>
    </location>
</feature>
<feature type="compositionally biased region" description="Polar residues" evidence="3">
    <location>
        <begin position="321"/>
        <end position="335"/>
    </location>
</feature>
<reference key="1">
    <citation type="journal article" date="2002" name="J. Insect Sci.">
        <title>Characterization of Z/E11- and Z9-desaturases from the obliquebanded leafroller moth, Choristoneura rosaceana.</title>
        <authorList>
            <person name="Hao G."/>
            <person name="O'Connor M."/>
            <person name="Liu W."/>
            <person name="Roelofs W.L."/>
        </authorList>
    </citation>
    <scope>NUCLEOTIDE SEQUENCE [MRNA]</scope>
    <scope>CATALYTIC ACTIVITY</scope>
    <scope>FUNCTION</scope>
    <scope>TISSUE SPECIFICITY</scope>
    <source>
        <tissue>Pheromone gland</tissue>
    </source>
</reference>
<reference key="2">
    <citation type="submission" date="2009-05" db="EMBL/GenBank/DDBJ databases">
        <title>Analysis of transcriptional profile and genomic organization of desaturase genes in moths.</title>
        <authorList>
            <person name="Xue B."/>
            <person name="Roelofs W.L."/>
            <person name="Rooney A.P."/>
        </authorList>
    </citation>
    <scope>NUCLEOTIDE SEQUENCE [GENOMIC DNA] OF 5-335</scope>
</reference>
<accession>Q8ISS3</accession>
<accession>D8L7A5</accession>
<sequence>MAPNVEDMESDLPESEEKLEKLVAPQAAPRKYQIIYTNLLTFGYWHIAGLYGLYLCFTSAKWQTIILALILNEMAILGITAGAHRLWAHRSYKATVPLQIILIIFNSLSFQNSAIHWIRDHRMHHKYSDTDGDPHNASRGFFYSHVGWLLVKKHPEVKKRAKTIDMSDIYSNPILRFQKKYAIPFIGMICFVLPTIIPMYFWGETLSNAWHITMLRYVFSLNSIFLVNSAAHLYGYRPYDKNILPAENKMTFIACLGENFHNYHHVFPWDYRASELGNIGMNWTAKFIDFFAWIGWAYDLKTASDENIKSRMKRTGDGTDVSGQKYSCESSEVLQ</sequence>
<keyword id="KW-0275">Fatty acid biosynthesis</keyword>
<keyword id="KW-0276">Fatty acid metabolism</keyword>
<keyword id="KW-0408">Iron</keyword>
<keyword id="KW-0444">Lipid biosynthesis</keyword>
<keyword id="KW-0443">Lipid metabolism</keyword>
<keyword id="KW-0472">Membrane</keyword>
<keyword id="KW-0479">Metal-binding</keyword>
<keyword id="KW-0560">Oxidoreductase</keyword>
<keyword id="KW-0812">Transmembrane</keyword>
<keyword id="KW-1133">Transmembrane helix</keyword>
<organism>
    <name type="scientific">Choristoneura rosaceana</name>
    <name type="common">Oblique banded leafroller</name>
    <dbReference type="NCBI Taxonomy" id="27543"/>
    <lineage>
        <taxon>Eukaryota</taxon>
        <taxon>Metazoa</taxon>
        <taxon>Ecdysozoa</taxon>
        <taxon>Arthropoda</taxon>
        <taxon>Hexapoda</taxon>
        <taxon>Insecta</taxon>
        <taxon>Pterygota</taxon>
        <taxon>Neoptera</taxon>
        <taxon>Endopterygota</taxon>
        <taxon>Lepidoptera</taxon>
        <taxon>Glossata</taxon>
        <taxon>Ditrysia</taxon>
        <taxon>Tortricoidea</taxon>
        <taxon>Tortricidae</taxon>
        <taxon>Tortricinae</taxon>
        <taxon>Choristoneura</taxon>
    </lineage>
</organism>
<comment type="function">
    <text evidence="4">Catalyzes the formation of Delta(11) fatty acyl precursors in the pheromone gland, with a preference for myristic acid.</text>
</comment>
<comment type="catalytic activity">
    <reaction evidence="4">
        <text>an 11,12-saturated fatty acyl-CoA + 2 Fe(II)-[cytochrome b5] + O2 + 2 H(+) = an (11Z)-Delta(11)-fatty acyl-CoA + 2 Fe(III)-[cytochrome b5] + 2 H2O</text>
        <dbReference type="Rhea" id="RHEA:25852"/>
        <dbReference type="Rhea" id="RHEA-COMP:10438"/>
        <dbReference type="Rhea" id="RHEA-COMP:10439"/>
        <dbReference type="ChEBI" id="CHEBI:15377"/>
        <dbReference type="ChEBI" id="CHEBI:15378"/>
        <dbReference type="ChEBI" id="CHEBI:15379"/>
        <dbReference type="ChEBI" id="CHEBI:29033"/>
        <dbReference type="ChEBI" id="CHEBI:29034"/>
        <dbReference type="ChEBI" id="CHEBI:84947"/>
        <dbReference type="ChEBI" id="CHEBI:84948"/>
        <dbReference type="EC" id="1.14.19.5"/>
    </reaction>
</comment>
<comment type="cofactor">
    <cofactor evidence="1">
        <name>Fe cation</name>
        <dbReference type="ChEBI" id="CHEBI:24875"/>
    </cofactor>
</comment>
<comment type="subcellular location">
    <subcellularLocation>
        <location evidence="1">Membrane</location>
        <topology evidence="1">Multi-pass membrane protein</topology>
    </subcellularLocation>
</comment>
<comment type="tissue specificity">
    <text evidence="4">Detected in pheromone gland.</text>
</comment>
<comment type="domain">
    <text evidence="1">The histidine box domains may contain the active site and/or be involved in metal ion binding.</text>
</comment>
<comment type="similarity">
    <text evidence="5">Belongs to the fatty acid desaturase type 1 family.</text>
</comment>
<dbReference type="EC" id="1.14.19.5" evidence="4"/>
<dbReference type="EMBL" id="AF545481">
    <property type="protein sequence ID" value="AAN41250.1"/>
    <property type="molecule type" value="mRNA"/>
</dbReference>
<dbReference type="EMBL" id="FJ999625">
    <property type="protein sequence ID" value="ADC53485.1"/>
    <property type="molecule type" value="Genomic_DNA"/>
</dbReference>
<dbReference type="SMR" id="Q8ISS3"/>
<dbReference type="BRENDA" id="1.14.19.24">
    <property type="organism ID" value="7754"/>
</dbReference>
<dbReference type="BRENDA" id="1.14.19.5">
    <property type="organism ID" value="7754"/>
</dbReference>
<dbReference type="GO" id="GO:0005789">
    <property type="term" value="C:endoplasmic reticulum membrane"/>
    <property type="evidence" value="ECO:0007669"/>
    <property type="project" value="TreeGrafter"/>
</dbReference>
<dbReference type="GO" id="GO:0017105">
    <property type="term" value="F:acyl-CoA 11-(Z)-desaturase activity"/>
    <property type="evidence" value="ECO:0000315"/>
    <property type="project" value="UniProtKB"/>
</dbReference>
<dbReference type="GO" id="GO:0005506">
    <property type="term" value="F:iron ion binding"/>
    <property type="evidence" value="ECO:0007669"/>
    <property type="project" value="TreeGrafter"/>
</dbReference>
<dbReference type="GO" id="GO:0004768">
    <property type="term" value="F:stearoyl-CoA 9-desaturase activity"/>
    <property type="evidence" value="ECO:0007669"/>
    <property type="project" value="TreeGrafter"/>
</dbReference>
<dbReference type="GO" id="GO:0006631">
    <property type="term" value="P:fatty acid metabolic process"/>
    <property type="evidence" value="ECO:0000314"/>
    <property type="project" value="UniProtKB"/>
</dbReference>
<dbReference type="GO" id="GO:0042811">
    <property type="term" value="P:pheromone biosynthetic process"/>
    <property type="evidence" value="ECO:0000315"/>
    <property type="project" value="UniProtKB"/>
</dbReference>
<dbReference type="GO" id="GO:0006636">
    <property type="term" value="P:unsaturated fatty acid biosynthetic process"/>
    <property type="evidence" value="ECO:0007669"/>
    <property type="project" value="TreeGrafter"/>
</dbReference>
<dbReference type="CDD" id="cd03505">
    <property type="entry name" value="Delta9-FADS-like"/>
    <property type="match status" value="1"/>
</dbReference>
<dbReference type="InterPro" id="IPR015876">
    <property type="entry name" value="Acyl-CoA_DS"/>
</dbReference>
<dbReference type="InterPro" id="IPR005804">
    <property type="entry name" value="FA_desaturase_dom"/>
</dbReference>
<dbReference type="InterPro" id="IPR001522">
    <property type="entry name" value="FADS-1_CS"/>
</dbReference>
<dbReference type="PANTHER" id="PTHR11351">
    <property type="entry name" value="ACYL-COA DESATURASE"/>
    <property type="match status" value="1"/>
</dbReference>
<dbReference type="PANTHER" id="PTHR11351:SF31">
    <property type="entry name" value="DESATURASE 1, ISOFORM A-RELATED"/>
    <property type="match status" value="1"/>
</dbReference>
<dbReference type="Pfam" id="PF00487">
    <property type="entry name" value="FA_desaturase"/>
    <property type="match status" value="1"/>
</dbReference>
<dbReference type="PRINTS" id="PR00075">
    <property type="entry name" value="FACDDSATRASE"/>
</dbReference>
<dbReference type="PROSITE" id="PS00476">
    <property type="entry name" value="FATTY_ACID_DESATUR_1"/>
    <property type="match status" value="1"/>
</dbReference>